<organism>
    <name type="scientific">Pyricularia oryzae (strain 70-15 / ATCC MYA-4617 / FGSC 8958)</name>
    <name type="common">Rice blast fungus</name>
    <name type="synonym">Magnaporthe oryzae</name>
    <dbReference type="NCBI Taxonomy" id="242507"/>
    <lineage>
        <taxon>Eukaryota</taxon>
        <taxon>Fungi</taxon>
        <taxon>Dikarya</taxon>
        <taxon>Ascomycota</taxon>
        <taxon>Pezizomycotina</taxon>
        <taxon>Sordariomycetes</taxon>
        <taxon>Sordariomycetidae</taxon>
        <taxon>Magnaporthales</taxon>
        <taxon>Pyriculariaceae</taxon>
        <taxon>Pyricularia</taxon>
    </lineage>
</organism>
<comment type="function">
    <text evidence="6 9">ABC transporter; part of the gene cluster that mediates the biosynthesis of pyriculol and pyriculariol, two heptaketides that induce lesion formation upon application on rice leaves but are dispensable for pathogenicity (PubMed:27902426). With the MFS transporter MFS1, is most likely responsible for pyriculol and pyriculariol secretion and thereby may contribute to intrinsic resistance (Probable).</text>
</comment>
<comment type="subcellular location">
    <subcellularLocation>
        <location evidence="1">Membrane</location>
        <topology evidence="1">Multi-pass membrane protein</topology>
    </subcellularLocation>
</comment>
<comment type="similarity">
    <text evidence="8">Belongs to the ABC transporter superfamily.</text>
</comment>
<evidence type="ECO:0000255" key="1"/>
<evidence type="ECO:0000255" key="2">
    <source>
        <dbReference type="PROSITE-ProRule" id="PRU00434"/>
    </source>
</evidence>
<evidence type="ECO:0000255" key="3">
    <source>
        <dbReference type="PROSITE-ProRule" id="PRU00441"/>
    </source>
</evidence>
<evidence type="ECO:0000255" key="4">
    <source>
        <dbReference type="PROSITE-ProRule" id="PRU00498"/>
    </source>
</evidence>
<evidence type="ECO:0000256" key="5">
    <source>
        <dbReference type="SAM" id="MobiDB-lite"/>
    </source>
</evidence>
<evidence type="ECO:0000269" key="6">
    <source>
    </source>
</evidence>
<evidence type="ECO:0000303" key="7">
    <source>
    </source>
</evidence>
<evidence type="ECO:0000305" key="8"/>
<evidence type="ECO:0000305" key="9">
    <source>
    </source>
</evidence>
<dbReference type="EMBL" id="CM001233">
    <property type="protein sequence ID" value="EHA52527.1"/>
    <property type="molecule type" value="Genomic_DNA"/>
</dbReference>
<dbReference type="RefSeq" id="XP_003712334.1">
    <property type="nucleotide sequence ID" value="XM_003712286.1"/>
</dbReference>
<dbReference type="SMR" id="G4N2B5"/>
<dbReference type="FunCoup" id="G4N2B5">
    <property type="interactions" value="180"/>
</dbReference>
<dbReference type="STRING" id="242507.G4N2B5"/>
<dbReference type="GlyCosmos" id="G4N2B5">
    <property type="glycosylation" value="10 sites, No reported glycans"/>
</dbReference>
<dbReference type="EnsemblFungi" id="MGG_04855T0">
    <property type="protein sequence ID" value="MGG_04855T0"/>
    <property type="gene ID" value="MGG_04855"/>
</dbReference>
<dbReference type="GeneID" id="2675285"/>
<dbReference type="KEGG" id="mgr:MGG_04855"/>
<dbReference type="VEuPathDB" id="FungiDB:MGG_04855"/>
<dbReference type="eggNOG" id="KOG0054">
    <property type="taxonomic scope" value="Eukaryota"/>
</dbReference>
<dbReference type="HOGENOM" id="CLU_000604_27_6_1"/>
<dbReference type="InParanoid" id="G4N2B5"/>
<dbReference type="OMA" id="RRRYILW"/>
<dbReference type="OrthoDB" id="6500128at2759"/>
<dbReference type="Proteomes" id="UP000009058">
    <property type="component" value="Chromosome 3"/>
</dbReference>
<dbReference type="GO" id="GO:0000329">
    <property type="term" value="C:fungal-type vacuole membrane"/>
    <property type="evidence" value="ECO:0007669"/>
    <property type="project" value="TreeGrafter"/>
</dbReference>
<dbReference type="GO" id="GO:0140359">
    <property type="term" value="F:ABC-type transporter activity"/>
    <property type="evidence" value="ECO:0007669"/>
    <property type="project" value="InterPro"/>
</dbReference>
<dbReference type="GO" id="GO:0005524">
    <property type="term" value="F:ATP binding"/>
    <property type="evidence" value="ECO:0007669"/>
    <property type="project" value="UniProtKB-KW"/>
</dbReference>
<dbReference type="GO" id="GO:0016887">
    <property type="term" value="F:ATP hydrolysis activity"/>
    <property type="evidence" value="ECO:0007669"/>
    <property type="project" value="InterPro"/>
</dbReference>
<dbReference type="CDD" id="cd18596">
    <property type="entry name" value="ABC_6TM_VMR1_D1_like"/>
    <property type="match status" value="1"/>
</dbReference>
<dbReference type="CDD" id="cd18604">
    <property type="entry name" value="ABC_6TM_VMR1_D2_like"/>
    <property type="match status" value="1"/>
</dbReference>
<dbReference type="CDD" id="cd03250">
    <property type="entry name" value="ABCC_MRP_domain1"/>
    <property type="match status" value="1"/>
</dbReference>
<dbReference type="CDD" id="cd03244">
    <property type="entry name" value="ABCC_MRP_domain2"/>
    <property type="match status" value="1"/>
</dbReference>
<dbReference type="FunFam" id="3.40.50.300:FF:000565">
    <property type="entry name" value="ABC bile acid transporter"/>
    <property type="match status" value="1"/>
</dbReference>
<dbReference type="FunFam" id="3.40.50.300:FF:000825">
    <property type="entry name" value="ABC bile acid transporter"/>
    <property type="match status" value="1"/>
</dbReference>
<dbReference type="Gene3D" id="1.20.1560.10">
    <property type="entry name" value="ABC transporter type 1, transmembrane domain"/>
    <property type="match status" value="2"/>
</dbReference>
<dbReference type="Gene3D" id="3.40.50.300">
    <property type="entry name" value="P-loop containing nucleotide triphosphate hydrolases"/>
    <property type="match status" value="2"/>
</dbReference>
<dbReference type="InterPro" id="IPR003593">
    <property type="entry name" value="AAA+_ATPase"/>
</dbReference>
<dbReference type="InterPro" id="IPR011527">
    <property type="entry name" value="ABC1_TM_dom"/>
</dbReference>
<dbReference type="InterPro" id="IPR036640">
    <property type="entry name" value="ABC1_TM_sf"/>
</dbReference>
<dbReference type="InterPro" id="IPR003439">
    <property type="entry name" value="ABC_transporter-like_ATP-bd"/>
</dbReference>
<dbReference type="InterPro" id="IPR017871">
    <property type="entry name" value="ABC_transporter-like_CS"/>
</dbReference>
<dbReference type="InterPro" id="IPR050173">
    <property type="entry name" value="ABC_transporter_C-like"/>
</dbReference>
<dbReference type="InterPro" id="IPR027417">
    <property type="entry name" value="P-loop_NTPase"/>
</dbReference>
<dbReference type="PANTHER" id="PTHR24223:SF353">
    <property type="entry name" value="ABC TRANSPORTER ATP-BINDING PROTEIN_PERMEASE VMR1-RELATED"/>
    <property type="match status" value="1"/>
</dbReference>
<dbReference type="PANTHER" id="PTHR24223">
    <property type="entry name" value="ATP-BINDING CASSETTE SUB-FAMILY C"/>
    <property type="match status" value="1"/>
</dbReference>
<dbReference type="Pfam" id="PF00664">
    <property type="entry name" value="ABC_membrane"/>
    <property type="match status" value="2"/>
</dbReference>
<dbReference type="Pfam" id="PF00005">
    <property type="entry name" value="ABC_tran"/>
    <property type="match status" value="2"/>
</dbReference>
<dbReference type="SMART" id="SM00382">
    <property type="entry name" value="AAA"/>
    <property type="match status" value="2"/>
</dbReference>
<dbReference type="SUPFAM" id="SSF90123">
    <property type="entry name" value="ABC transporter transmembrane region"/>
    <property type="match status" value="2"/>
</dbReference>
<dbReference type="SUPFAM" id="SSF52540">
    <property type="entry name" value="P-loop containing nucleoside triphosphate hydrolases"/>
    <property type="match status" value="2"/>
</dbReference>
<dbReference type="PROSITE" id="PS50929">
    <property type="entry name" value="ABC_TM1F"/>
    <property type="match status" value="2"/>
</dbReference>
<dbReference type="PROSITE" id="PS00211">
    <property type="entry name" value="ABC_TRANSPORTER_1"/>
    <property type="match status" value="2"/>
</dbReference>
<dbReference type="PROSITE" id="PS50893">
    <property type="entry name" value="ABC_TRANSPORTER_2"/>
    <property type="match status" value="2"/>
</dbReference>
<feature type="chain" id="PRO_0000446274" description="ABC transporter 7">
    <location>
        <begin position="1"/>
        <end position="1683"/>
    </location>
</feature>
<feature type="transmembrane region" description="Helical" evidence="1">
    <location>
        <begin position="24"/>
        <end position="44"/>
    </location>
</feature>
<feature type="transmembrane region" description="Helical" evidence="1">
    <location>
        <begin position="127"/>
        <end position="147"/>
    </location>
</feature>
<feature type="transmembrane region" description="Helical" evidence="1">
    <location>
        <begin position="157"/>
        <end position="177"/>
    </location>
</feature>
<feature type="transmembrane region" description="Helical" evidence="1">
    <location>
        <begin position="190"/>
        <end position="210"/>
    </location>
</feature>
<feature type="transmembrane region" description="Helical" evidence="1">
    <location>
        <begin position="221"/>
        <end position="241"/>
    </location>
</feature>
<feature type="transmembrane region" description="Helical" evidence="1 3">
    <location>
        <begin position="336"/>
        <end position="356"/>
    </location>
</feature>
<feature type="transmembrane region" description="Helical" evidence="1 3">
    <location>
        <begin position="368"/>
        <end position="388"/>
    </location>
</feature>
<feature type="transmembrane region" description="Helical" evidence="1 3">
    <location>
        <begin position="496"/>
        <end position="516"/>
    </location>
</feature>
<feature type="transmembrane region" description="Helical" evidence="1 3">
    <location>
        <begin position="518"/>
        <end position="538"/>
    </location>
</feature>
<feature type="transmembrane region" description="Helical" evidence="1 3">
    <location>
        <begin position="602"/>
        <end position="622"/>
    </location>
</feature>
<feature type="transmembrane region" description="Helical" evidence="1 3">
    <location>
        <begin position="632"/>
        <end position="648"/>
    </location>
</feature>
<feature type="transmembrane region" description="Helical" evidence="1">
    <location>
        <begin position="1016"/>
        <end position="1036"/>
    </location>
</feature>
<feature type="transmembrane region" description="Helical" evidence="1 3">
    <location>
        <begin position="1111"/>
        <end position="1131"/>
    </location>
</feature>
<feature type="transmembrane region" description="Helical" evidence="1 3">
    <location>
        <begin position="1182"/>
        <end position="1202"/>
    </location>
</feature>
<feature type="transmembrane region" description="Helical" evidence="1 3">
    <location>
        <begin position="1204"/>
        <end position="1224"/>
    </location>
</feature>
<feature type="transmembrane region" description="Helical" evidence="1 3">
    <location>
        <begin position="1304"/>
        <end position="1324"/>
    </location>
</feature>
<feature type="transmembrane region" description="Helical" evidence="1 3">
    <location>
        <begin position="1327"/>
        <end position="1347"/>
    </location>
</feature>
<feature type="domain" description="ABC transmembrane type-1 1" evidence="3">
    <location>
        <begin position="338"/>
        <end position="664"/>
    </location>
</feature>
<feature type="domain" description="ABC transporter 1" evidence="2">
    <location>
        <begin position="700"/>
        <end position="949"/>
    </location>
</feature>
<feature type="domain" description="ABC transmembrane type-1 2" evidence="3">
    <location>
        <begin position="1028"/>
        <end position="1351"/>
    </location>
</feature>
<feature type="domain" description="ABC transporter 2" evidence="2">
    <location>
        <begin position="1392"/>
        <end position="1649"/>
    </location>
</feature>
<feature type="region of interest" description="Disordered" evidence="5">
    <location>
        <begin position="53"/>
        <end position="93"/>
    </location>
</feature>
<feature type="region of interest" description="Disordered" evidence="5">
    <location>
        <begin position="451"/>
        <end position="473"/>
    </location>
</feature>
<feature type="region of interest" description="Disordered" evidence="5">
    <location>
        <begin position="952"/>
        <end position="998"/>
    </location>
</feature>
<feature type="compositionally biased region" description="Acidic residues" evidence="5">
    <location>
        <begin position="81"/>
        <end position="93"/>
    </location>
</feature>
<feature type="binding site" evidence="2">
    <location>
        <begin position="742"/>
        <end position="749"/>
    </location>
    <ligand>
        <name>ATP</name>
        <dbReference type="ChEBI" id="CHEBI:30616"/>
    </ligand>
</feature>
<feature type="binding site" evidence="2">
    <location>
        <begin position="1426"/>
        <end position="1433"/>
    </location>
    <ligand>
        <name>ATP</name>
        <dbReference type="ChEBI" id="CHEBI:30616"/>
    </ligand>
</feature>
<feature type="glycosylation site" description="N-linked (GlcNAc...) asparagine" evidence="4">
    <location>
        <position position="247"/>
    </location>
</feature>
<feature type="glycosylation site" description="N-linked (GlcNAc...) asparagine" evidence="4">
    <location>
        <position position="489"/>
    </location>
</feature>
<feature type="glycosylation site" description="N-linked (GlcNAc...) asparagine" evidence="4">
    <location>
        <position position="545"/>
    </location>
</feature>
<feature type="glycosylation site" description="N-linked (GlcNAc...) asparagine" evidence="4">
    <location>
        <position position="956"/>
    </location>
</feature>
<feature type="glycosylation site" description="N-linked (GlcNAc...) asparagine" evidence="4">
    <location>
        <position position="1097"/>
    </location>
</feature>
<feature type="glycosylation site" description="N-linked (GlcNAc...) asparagine" evidence="4">
    <location>
        <position position="1277"/>
    </location>
</feature>
<feature type="glycosylation site" description="N-linked (GlcNAc...) asparagine" evidence="4">
    <location>
        <position position="1396"/>
    </location>
</feature>
<feature type="glycosylation site" description="N-linked (GlcNAc...) asparagine" evidence="4">
    <location>
        <position position="1411"/>
    </location>
</feature>
<feature type="glycosylation site" description="N-linked (GlcNAc...) asparagine" evidence="4">
    <location>
        <position position="1541"/>
    </location>
</feature>
<feature type="glycosylation site" description="N-linked (GlcNAc...) asparagine" evidence="4">
    <location>
        <position position="1552"/>
    </location>
</feature>
<keyword id="KW-0067">ATP-binding</keyword>
<keyword id="KW-0325">Glycoprotein</keyword>
<keyword id="KW-0472">Membrane</keyword>
<keyword id="KW-0547">Nucleotide-binding</keyword>
<keyword id="KW-1185">Reference proteome</keyword>
<keyword id="KW-0677">Repeat</keyword>
<keyword id="KW-0812">Transmembrane</keyword>
<keyword id="KW-1133">Transmembrane helix</keyword>
<keyword id="KW-0813">Transport</keyword>
<gene>
    <name evidence="7" type="primary">ABC7</name>
    <name type="ORF">MGG_04855</name>
</gene>
<accession>G4N2B5</accession>
<sequence>MGGVGQCQWPVWQVDDLTPCFQHDYLRILLPAVVIGLSVLNLGFRSARHAASRSKSPSTHAYAPVSNGDNSRPGAHRTDISPDDDAIAQDDEDDDEGLAIGGGRLALVKTATKGSIVQADTPPAQTLSVVVEELAIAGLVAVYVIALLSPKAHGSYTLTGTIIGLTTWVYVLVLATLRLFLGNTQWRVPHLWNHTAAIYSCQWLFLIGIFRSAMVHPSSKLAQILVIVEFALTSLLFFMAITTRKGNKTVLLEWEDGIPPARENLASLFSSFTFSWVDQIVWQGYKEPFEMGKVWNLLPKDKAATVLSHYRRVKKTTKLYWHLLRYFKGDLLSQAGWAVMSGMFTFAPTMLLKAILEYVEEPESAPRSVVWLYVILLPVTDIIRSLGDNRALWIGRKICINVRAILVGEIYAKALRRKAATGKDTVLGSEKKEDKPKGGFISKIKKMLCLGDNDESEDGKDGDKDKEDSSDEQANHGTIINLMSVDSFNVSEVTSYLHFLFASAPTQLLVSVVLLYQVLGMSAIPGFVVMVLLLPVNIGFGRAFNSTQKKIMACSDKRIHSTNEVLQNIRIIKYFAWEHRFSESVDEKRKAELKALRARYMVWACAVAVWNTVPLLITFFSFLMYTTVEKRPLHPSIAFTSISLFMLLRHPLDQLGDMLAHVQEAKVSIDRIEEFLSEEETDKFIQLGEDNVNEEGTRIIALKDAAFIWGGKDIIAADGSQAFRLLDIDTEFMIGKLNVIAGPTGSGKTSLLMALLGEMTLLKGRVYLPGGRSREDVRPDPETGLAETCAYVAQQAWLVNANIKDNILFSARFDEKRYRDVIVACALERDLEILDNGDETLVGEKGITLSGGQKQRISLARAVYSNSKHLLLDDCLSAVDSHTAQWIFNNCIRGPLMKDRTCIMVTHNIPLCVPHSDFVVVMDNGRITHQGRALEVITSGALGEEIAQKAKSETPNISRIPSRVPSSVGEGSGNTLLDTDGDDHLSKPKNAKKAKKAEAMEETKATGAVKWPVMKLYLASMGSWWFWVVAGCIFISQQASDVVSNLWIKQWASQYTTEVSSVPISTSSHMYGTQSFAPTYMVPVQTYVKDQLARNGNATALDIVVNSEVNAQYYLVVLAIIGLAGSLTAFLRDLWIFFGSLTASAKIHTRLLNTVTRAKFRFFDVTPLGQMMNRFSKDMEAVDQEVAPIAIGILSCALGITVTVVLIASITPGFLIAAVFITIAYVLLAKFYLASSRDLKRLESVQRSPLFQQFGETLSGVTTIRAYGDERRFVRDNLTRINGQLRPMIYLWATNRWLAFRTDLLGDFVSFFAGVFVILSIGVIDAGWAGISLSYAIGFAENILWLVRLYSINEQNMNAVERIKEYLEVEQEAAPICEKNRPPQNWPAQGSVEFINYTTSYRKELDPVLRNVTFKISPQEKVGIVGRTGAGKSSLALAIFRALEADGGKILIDGIDIGLIGLRDLREAITIVPQEPTLFTGTIRSNLDPFHLFTDEQIYKSLQRVQLIGPDETIPTADASPVLPASPTTPGGASNKNIFLNLSSKVSESGSNLSQGQRQLLCLARALLKEPRVLVMDEATASIDYATDSKIQDTIREMKDTTIITIAHRLQTIADYDKVLVLDKGEVVEYAHPWELMRKGEGGSFKSMCDMSGDTELLAKAAKKAFDAKKLIDVDDEAADAAP</sequence>
<proteinExistence type="inferred from homology"/>
<reference key="1">
    <citation type="journal article" date="2005" name="Nature">
        <title>The genome sequence of the rice blast fungus Magnaporthe grisea.</title>
        <authorList>
            <person name="Dean R.A."/>
            <person name="Talbot N.J."/>
            <person name="Ebbole D.J."/>
            <person name="Farman M.L."/>
            <person name="Mitchell T.K."/>
            <person name="Orbach M.J."/>
            <person name="Thon M.R."/>
            <person name="Kulkarni R."/>
            <person name="Xu J.-R."/>
            <person name="Pan H."/>
            <person name="Read N.D."/>
            <person name="Lee Y.-H."/>
            <person name="Carbone I."/>
            <person name="Brown D."/>
            <person name="Oh Y.Y."/>
            <person name="Donofrio N."/>
            <person name="Jeong J.S."/>
            <person name="Soanes D.M."/>
            <person name="Djonovic S."/>
            <person name="Kolomiets E."/>
            <person name="Rehmeyer C."/>
            <person name="Li W."/>
            <person name="Harding M."/>
            <person name="Kim S."/>
            <person name="Lebrun M.-H."/>
            <person name="Bohnert H."/>
            <person name="Coughlan S."/>
            <person name="Butler J."/>
            <person name="Calvo S.E."/>
            <person name="Ma L.-J."/>
            <person name="Nicol R."/>
            <person name="Purcell S."/>
            <person name="Nusbaum C."/>
            <person name="Galagan J.E."/>
            <person name="Birren B.W."/>
        </authorList>
    </citation>
    <scope>NUCLEOTIDE SEQUENCE [LARGE SCALE GENOMIC DNA]</scope>
    <source>
        <strain>70-15 / ATCC MYA-4617 / FGSC 8958</strain>
    </source>
</reference>
<reference key="2">
    <citation type="journal article" date="2017" name="Microbiology">
        <title>Unravelling the biosynthesis of pyriculol in the rice blast fungus Magnaporthe oryzae.</title>
        <authorList>
            <person name="Jacob S."/>
            <person name="Groetsch T."/>
            <person name="Foster A.J."/>
            <person name="Schueffler A."/>
            <person name="Rieger P.H."/>
            <person name="Sandjo L.P."/>
            <person name="Liermann J.C."/>
            <person name="Opatz T."/>
            <person name="Thines E."/>
        </authorList>
    </citation>
    <scope>IDENTIFICATION</scope>
    <scope>FUNCTION</scope>
</reference>
<name>ABC7_PYRO7</name>
<protein>
    <recommendedName>
        <fullName evidence="7">ABC transporter 7</fullName>
    </recommendedName>
    <alternativeName>
        <fullName evidence="7">Pyriculol/pyriculariol biosynthesis cluster protein ABC7</fullName>
    </alternativeName>
</protein>